<feature type="signal peptide" evidence="2">
    <location>
        <begin position="1"/>
        <end position="19"/>
    </location>
</feature>
<feature type="chain" id="PRO_0000316181" description="Toxin 3FTx-Dis4">
    <location>
        <begin position="20"/>
        <end position="86"/>
    </location>
</feature>
<feature type="disulfide bond">
    <location>
        <begin position="24"/>
        <end position="45"/>
    </location>
</feature>
<feature type="disulfide bond">
    <location>
        <begin position="38"/>
        <end position="63"/>
    </location>
</feature>
<feature type="disulfide bond">
    <location>
        <begin position="79"/>
        <end position="84"/>
    </location>
</feature>
<keyword id="KW-1015">Disulfide bond</keyword>
<keyword id="KW-0964">Secreted</keyword>
<keyword id="KW-0732">Signal</keyword>
<keyword id="KW-0800">Toxin</keyword>
<organism>
    <name type="scientific">Dispholidus typus</name>
    <name type="common">Boomslang</name>
    <name type="synonym">Bucephalus typus</name>
    <dbReference type="NCBI Taxonomy" id="46295"/>
    <lineage>
        <taxon>Eukaryota</taxon>
        <taxon>Metazoa</taxon>
        <taxon>Chordata</taxon>
        <taxon>Craniata</taxon>
        <taxon>Vertebrata</taxon>
        <taxon>Euteleostomi</taxon>
        <taxon>Lepidosauria</taxon>
        <taxon>Squamata</taxon>
        <taxon>Bifurcata</taxon>
        <taxon>Unidentata</taxon>
        <taxon>Episquamata</taxon>
        <taxon>Toxicofera</taxon>
        <taxon>Serpentes</taxon>
        <taxon>Colubroidea</taxon>
        <taxon>Colubridae</taxon>
        <taxon>Colubrinae</taxon>
        <taxon>Dispholidus</taxon>
    </lineage>
</organism>
<comment type="subcellular location">
    <subcellularLocation>
        <location evidence="1">Secreted</location>
    </subcellularLocation>
</comment>
<comment type="tissue specificity">
    <text evidence="3">Expressed by the venom gland.</text>
</comment>
<comment type="similarity">
    <text evidence="3">Belongs to the three-finger toxin family. Ancestral subfamily.</text>
</comment>
<reference key="1">
    <citation type="journal article" date="2008" name="Mol. Cell. Proteomics">
        <title>Evolution of an arsenal: structural and functional diversification of the venom system in the advanced snakes (Caenophidia).</title>
        <authorList>
            <person name="Fry B.G."/>
            <person name="Scheib H."/>
            <person name="van der Weerd L."/>
            <person name="Young B."/>
            <person name="McNaughtan J."/>
            <person name="Ramjan S.F.R."/>
            <person name="Vidal N."/>
            <person name="Poelmann R.E."/>
            <person name="Norman J.A."/>
        </authorList>
    </citation>
    <scope>NUCLEOTIDE SEQUENCE [LARGE SCALE MRNA]</scope>
    <source>
        <tissue>Venom gland</tissue>
    </source>
</reference>
<protein>
    <recommendedName>
        <fullName evidence="4">Toxin 3FTx-Dis4</fullName>
    </recommendedName>
</protein>
<accession>A7X6J0</accession>
<sequence>MKTLLLSLVMVGFMYLVSGQNRTCRSCTGALCLKIEQCKEGQNLCFERKITDDFFGMKTVRGCADTCANPGENEKVTYCSTDNCNS</sequence>
<name>3NX4_DISTY</name>
<proteinExistence type="evidence at protein level"/>
<evidence type="ECO:0000250" key="1"/>
<evidence type="ECO:0000255" key="2"/>
<evidence type="ECO:0000305" key="3"/>
<evidence type="ECO:0000312" key="4">
    <source>
        <dbReference type="EMBL" id="ABU68567.1"/>
    </source>
</evidence>
<dbReference type="EMBL" id="EU036636">
    <property type="protein sequence ID" value="ABU68567.1"/>
    <property type="molecule type" value="mRNA"/>
</dbReference>
<dbReference type="SMR" id="A7X6J0"/>
<dbReference type="GO" id="GO:0005576">
    <property type="term" value="C:extracellular region"/>
    <property type="evidence" value="ECO:0007669"/>
    <property type="project" value="UniProtKB-SubCell"/>
</dbReference>
<dbReference type="GO" id="GO:0090729">
    <property type="term" value="F:toxin activity"/>
    <property type="evidence" value="ECO:0007669"/>
    <property type="project" value="UniProtKB-KW"/>
</dbReference>
<dbReference type="CDD" id="cd00206">
    <property type="entry name" value="TFP_snake_toxin"/>
    <property type="match status" value="1"/>
</dbReference>
<dbReference type="Gene3D" id="2.10.60.10">
    <property type="entry name" value="CD59"/>
    <property type="match status" value="1"/>
</dbReference>
<dbReference type="InterPro" id="IPR003571">
    <property type="entry name" value="Snake_3FTx"/>
</dbReference>
<dbReference type="InterPro" id="IPR045860">
    <property type="entry name" value="Snake_toxin-like_sf"/>
</dbReference>
<dbReference type="InterPro" id="IPR054131">
    <property type="entry name" value="Toxin_cobra-type"/>
</dbReference>
<dbReference type="Pfam" id="PF21947">
    <property type="entry name" value="Toxin_cobra-type"/>
    <property type="match status" value="1"/>
</dbReference>
<dbReference type="SUPFAM" id="SSF57302">
    <property type="entry name" value="Snake toxin-like"/>
    <property type="match status" value="1"/>
</dbReference>